<comment type="function">
    <text evidence="2">Cysteine protease that acts as a key streptococcal virulence factor by cleaving host proteins involved in immune response. Triggers inflammation by mediating cleavage of host proteins, which can both promote host pathogenesis by triggering sterile inflammation and/or restrict streptococcal infection, depending on host immune statue and infection site. Cleaves host gasdermin-A (GSDMA) in epithelial cells, promoting GSDMA activation and formation of gasdermin pores, triggering pyroptosis. Pyroptosis triggers the elimination of the infected skin cell, depriving the pathogen of its protective niche, while inducing an inflammatory response. This ultimately prevents bacterial penetration of the epithelial barrier and a subsequent systemic dissemination of the pathogen. Also mediates cleavage of the cytokine precursor interleukin-1 beta (IL1B) to its mature form, resulting in inflammation and septic shock. SpeB-mediated maturation of IL1B plays a dual role depending on infection site: while IL1B inflammatory response prevents bacterial growth during invasive skin infections, it promotes streptococcal infection of the nasopharynx by disrupting colonization resistance mediated by the microbiota. Inhibits host autophagy be catalyzing cleavage and inactivation of key autophagy factors, such as CALCOCO2, NBR1 and SQSTM1. Cleaves and inhibits a number of complement factors, such as C2, C3-beta chain of C3, C4, C5 or SERPING1, thereby promoting evasion of host immunity. May also impair adaptive immunity by catalyzing cleavage and degradation of host immunoglobulins to promote immune system evasion; the relevance of this activity is however unsure in vivo. Catalyzes maturation and release of the peptide hormone bradykinin from the precursor Kininogen-1 (KNG1) to produce hypotension during septic shock. Also involved in bacterial translocation across the host epithelial barrier by mediating cleavage and degradation of host epithelial junction proteins, such as CDH1 and OCLN. Additionally, has been involved in degradation of fibronectin and vitronectin, two host extracellular matrix proteins involved in tissue integrity. Also able to catalyze cleavage and degradation of streptococcal proteins, such as C5a peptidase, EndoS or SmeZ. Degradation of streptococcal proteins is however strictly regulated to preserve integrity of other virulence factors.</text>
</comment>
<comment type="catalytic activity">
    <reaction evidence="2">
        <text>Preferential cleavage with hydrophobic residues at P2, P1 and P1'.</text>
        <dbReference type="EC" id="3.4.22.10"/>
    </reaction>
</comment>
<comment type="activity regulation">
    <text evidence="1 2">Synthesized as an inactive zymogen to protect the intracellular components of the bacteria from proteolytic activity during protein production (By similarity). Once secreted into the extracellular milieu, cleaved into the active protease: maturation can be mediated in cis by autocatalytic cleavage, or in trans by mature SpeB or host proteases. Protease activity is strongly inhibited by zinc and copper, which prevent its maturation into an active protease: inhibition by metal ions may be required to prevent proteolysis of streptococcal proteins (By similarity).</text>
</comment>
<comment type="subunit">
    <text evidence="1">Monomer.</text>
</comment>
<comment type="subcellular location">
    <subcellularLocation>
        <location evidence="2">Secreted</location>
    </subcellularLocation>
    <subcellularLocation>
        <location evidence="2">Host extracellular space</location>
    </subcellularLocation>
    <subcellularLocation>
        <location evidence="2">Host cytoplasm</location>
    </subcellularLocation>
</comment>
<comment type="domain">
    <text evidence="1">The C-terminal active site loop is required for the recognition and recruitment of substrates and release of hydrolyzed products.</text>
</comment>
<comment type="PTM">
    <text evidence="2">The mature protease is derived from the precursor sequence by cleavage, either in cis via an autocatalytic mechanism, or in trans by mature SpeB or host proteases (trypsin, plasmin or subtilisin). Maturation can involve a number of protein cleavage intermediates. Mature SpeB probably plays the most important role in protein maturation in physiological conditions.</text>
</comment>
<comment type="PTM">
    <text evidence="1">Methylthiolation at Cys-192 of the inactive zymogen form is probably involved in the mechanism of secretion of the proteinase into the culture fluid.</text>
</comment>
<comment type="similarity">
    <text evidence="3">Belongs to the peptidase C10 family.</text>
</comment>
<accession>P0DD39</accession>
<accession>P00788</accession>
<accession>P26296</accession>
<accession>P68884</accession>
<accession>Q54960</accession>
<accession>Q54961</accession>
<accession>Q54962</accession>
<accession>Q54963</accession>
<accession>Q54964</accession>
<accession>Q54965</accession>
<accession>Q54966</accession>
<accession>Q54967</accession>
<accession>Q54968</accession>
<accession>Q57024</accession>
<accession>Q57082</accession>
<accession>Q57202</accession>
<accession>Q57211</accession>
<accession>Q57212</accession>
<accession>Q9S680</accession>
<protein>
    <recommendedName>
        <fullName>Streptopain</fullName>
        <ecNumber>3.4.22.10</ecNumber>
    </recommendedName>
    <alternativeName>
        <fullName>Exotoxin type B</fullName>
    </alternativeName>
    <alternativeName>
        <fullName>SPE B</fullName>
    </alternativeName>
    <alternativeName>
        <fullName>Streptococcal cysteine proteinase</fullName>
    </alternativeName>
    <alternativeName>
        <fullName>Streptococcus peptidase A</fullName>
        <shortName>SPP</shortName>
    </alternativeName>
</protein>
<reference key="1">
    <citation type="journal article" date="2003" name="Genome Res.">
        <title>Genome sequence of an M3 strain of Streptococcus pyogenes reveals a large-scale genomic rearrangement in invasive strains and new insights into phage evolution.</title>
        <authorList>
            <person name="Nakagawa I."/>
            <person name="Kurokawa K."/>
            <person name="Yamashita A."/>
            <person name="Nakata M."/>
            <person name="Tomiyasu Y."/>
            <person name="Okahashi N."/>
            <person name="Kawabata S."/>
            <person name="Yamazaki K."/>
            <person name="Shiba T."/>
            <person name="Yasunaga T."/>
            <person name="Hayashi H."/>
            <person name="Hattori M."/>
            <person name="Hamada S."/>
        </authorList>
    </citation>
    <scope>NUCLEOTIDE SEQUENCE [LARGE SCALE GENOMIC DNA]</scope>
    <source>
        <strain>SSI-1</strain>
    </source>
</reference>
<proteinExistence type="inferred from homology"/>
<name>SPEB_STRPQ</name>
<gene>
    <name type="primary">speB</name>
    <name type="ordered locus">SPs1739</name>
</gene>
<sequence length="398" mass="43174">MNKKKLGIRLLSLLALGGFVLANPVFADQNFARNEKEAKDSAITFIQKSAAIKAGARSAEDIKLDKVNLGGELSGSNMYVYNISTGGFVIVSGDKRSPEILGYSTSGSFDANGKENIASFMESYVEQIKENKKLDTTYAGTAEIKQPVVKSLLDSKGIHYNQGNPYNLLTPVIEKVKPGEQSFVGQHAATGCVATATAQIMKYHNYPNKGLKDYTYTLSSNNPYFNHPKNLFAAISTRQYNWNNILPTYSGRESNVQKMAISELMADVGISVDMDYGPSSGSAGSSRVQRALKENFGYNQSVHQINRSDFSKQDWEAQIDKELSQNQPVYYQGVGKVGGHAFVIDGADGRNFYHVNWGWGGVSDGFFRLDALNPSALGTGGGAGGFNGYQSAVVGIKP</sequence>
<dbReference type="EC" id="3.4.22.10"/>
<dbReference type="EMBL" id="BA000034">
    <property type="protein sequence ID" value="BAC64834.1"/>
    <property type="molecule type" value="Genomic_DNA"/>
</dbReference>
<dbReference type="RefSeq" id="WP_002991253.1">
    <property type="nucleotide sequence ID" value="NC_004606.1"/>
</dbReference>
<dbReference type="BMRB" id="P0DD39"/>
<dbReference type="SMR" id="P0DD39"/>
<dbReference type="MEROPS" id="C10.001"/>
<dbReference type="KEGG" id="sps:SPs1739"/>
<dbReference type="HOGENOM" id="CLU_716727_0_0_9"/>
<dbReference type="GO" id="GO:0005576">
    <property type="term" value="C:extracellular region"/>
    <property type="evidence" value="ECO:0007669"/>
    <property type="project" value="UniProtKB-SubCell"/>
</dbReference>
<dbReference type="GO" id="GO:0044164">
    <property type="term" value="C:host cell cytosol"/>
    <property type="evidence" value="ECO:0000250"/>
    <property type="project" value="UniProtKB"/>
</dbReference>
<dbReference type="GO" id="GO:0043655">
    <property type="term" value="C:host extracellular space"/>
    <property type="evidence" value="ECO:0000250"/>
    <property type="project" value="UniProtKB"/>
</dbReference>
<dbReference type="GO" id="GO:0004197">
    <property type="term" value="F:cysteine-type endopeptidase activity"/>
    <property type="evidence" value="ECO:0000250"/>
    <property type="project" value="UniProtKB"/>
</dbReference>
<dbReference type="GO" id="GO:0090729">
    <property type="term" value="F:toxin activity"/>
    <property type="evidence" value="ECO:0007669"/>
    <property type="project" value="UniProtKB-KW"/>
</dbReference>
<dbReference type="GO" id="GO:0006508">
    <property type="term" value="P:proteolysis"/>
    <property type="evidence" value="ECO:0007669"/>
    <property type="project" value="UniProtKB-KW"/>
</dbReference>
<dbReference type="GO" id="GO:0034050">
    <property type="term" value="P:symbiont-induced defense-related programmed cell death"/>
    <property type="evidence" value="ECO:0000250"/>
    <property type="project" value="UniProtKB"/>
</dbReference>
<dbReference type="GO" id="GO:0042783">
    <property type="term" value="P:symbiont-mediated evasion of host immune response"/>
    <property type="evidence" value="ECO:0000250"/>
    <property type="project" value="UniProtKB"/>
</dbReference>
<dbReference type="GO" id="GO:0140321">
    <property type="term" value="P:symbiont-mediated suppression of host autophagy"/>
    <property type="evidence" value="ECO:0000250"/>
    <property type="project" value="UniProtKB"/>
</dbReference>
<dbReference type="Gene3D" id="3.90.70.50">
    <property type="entry name" value="Peptidase C10, streptopain"/>
    <property type="match status" value="1"/>
</dbReference>
<dbReference type="InterPro" id="IPR038765">
    <property type="entry name" value="Papain-like_cys_pep_sf"/>
</dbReference>
<dbReference type="InterPro" id="IPR000200">
    <property type="entry name" value="Peptidase_C10"/>
</dbReference>
<dbReference type="InterPro" id="IPR025896">
    <property type="entry name" value="Spi_Prtas-inh"/>
</dbReference>
<dbReference type="InterPro" id="IPR044934">
    <property type="entry name" value="Streptopain_sf"/>
</dbReference>
<dbReference type="Pfam" id="PF13734">
    <property type="entry name" value="Inhibitor_I69"/>
    <property type="match status" value="1"/>
</dbReference>
<dbReference type="Pfam" id="PF01640">
    <property type="entry name" value="Peptidase_C10"/>
    <property type="match status" value="1"/>
</dbReference>
<dbReference type="PRINTS" id="PR00797">
    <property type="entry name" value="STREPTOPAIN"/>
</dbReference>
<dbReference type="SUPFAM" id="SSF54001">
    <property type="entry name" value="Cysteine proteinases"/>
    <property type="match status" value="1"/>
</dbReference>
<organism>
    <name type="scientific">Streptococcus pyogenes serotype M3 (strain SSI-1)</name>
    <dbReference type="NCBI Taxonomy" id="193567"/>
    <lineage>
        <taxon>Bacteria</taxon>
        <taxon>Bacillati</taxon>
        <taxon>Bacillota</taxon>
        <taxon>Bacilli</taxon>
        <taxon>Lactobacillales</taxon>
        <taxon>Streptococcaceae</taxon>
        <taxon>Streptococcus</taxon>
    </lineage>
</organism>
<keyword id="KW-0068">Autocatalytic cleavage</keyword>
<keyword id="KW-1035">Host cytoplasm</keyword>
<keyword id="KW-0378">Hydrolase</keyword>
<keyword id="KW-0488">Methylation</keyword>
<keyword id="KW-0645">Protease</keyword>
<keyword id="KW-0964">Secreted</keyword>
<keyword id="KW-0732">Signal</keyword>
<keyword id="KW-0788">Thiol protease</keyword>
<keyword id="KW-0800">Toxin</keyword>
<keyword id="KW-0843">Virulence</keyword>
<keyword id="KW-0865">Zymogen</keyword>
<evidence type="ECO:0000250" key="1">
    <source>
        <dbReference type="UniProtKB" id="P0C0J0"/>
    </source>
</evidence>
<evidence type="ECO:0000250" key="2">
    <source>
        <dbReference type="UniProtKB" id="P0C0J1"/>
    </source>
</evidence>
<evidence type="ECO:0000305" key="3"/>
<feature type="signal peptide" evidence="1">
    <location>
        <begin position="1"/>
        <end position="27"/>
    </location>
</feature>
<feature type="propeptide" id="PRO_0000411458" evidence="1">
    <location>
        <begin position="28"/>
        <end position="145"/>
    </location>
</feature>
<feature type="chain" id="PRO_0000411459" description="Streptopain">
    <location>
        <begin position="146"/>
        <end position="398"/>
    </location>
</feature>
<feature type="region of interest" description="C-terminal active site loop" evidence="1">
    <location>
        <begin position="368"/>
        <end position="390"/>
    </location>
</feature>
<feature type="active site" description="Nucleophile" evidence="1">
    <location>
        <position position="192"/>
    </location>
</feature>
<feature type="active site" description="Proton acceptor" evidence="1">
    <location>
        <position position="340"/>
    </location>
</feature>
<feature type="binding site" evidence="1">
    <location>
        <position position="282"/>
    </location>
    <ligand>
        <name>a protein</name>
        <dbReference type="ChEBI" id="CHEBI:16541"/>
    </ligand>
</feature>
<feature type="binding site" evidence="1">
    <location>
        <position position="339"/>
    </location>
    <ligand>
        <name>a protein</name>
        <dbReference type="ChEBI" id="CHEBI:16541"/>
    </ligand>
</feature>
<feature type="modified residue" description="Cysteine methyl disulfide; in zymogen form" evidence="1">
    <location>
        <position position="192"/>
    </location>
</feature>